<sequence>MPKREDIKKVLLIGSGPITIGQAAEFDFSGSQACRSLKEEGVQVVLVNSNPATIMTDPEMADSVYIEPLDARIVEKIIEKERPDGIIAGIGGQTGLNITSELAEMGVFEKYGVQILGTPVEAIKNTEDRELFKETMLRIGEKVPQSRAVHTLKEAEEVVEELGLPLIVRPAYTLGGAGGGIARTKEELLEITERGLRRSRISQVLIEESVLGWAEVEYEVMRDANDTCIVICNMENIDPMGVHTGESAVVAPSQTLTDAEHQMLRSASIKIIRALKIEGGCNIQYALKEGDYRIVEVNPRVSRSSALASKATGYPIARVTAKIAIGMALDEIINSVTKNTPASFEPALDYVITKIPRWPFDKFVTADKTLTTAMKSTGEIMAIGRTMEESLLKAFKSLDIDSQLGNKRWDEHEVKTLLKTPTSERLFVIFHALERGMSVKEIAELTSINPFFISKIKKIVEMEKRIRTEELTSELLREVKKLGFPDTRLAELTGKTREQISDLRHDAGILATFKMVDTCAAEFQAATPYYYSTYEDTCETNPTDRKKILILGAGPIRIGQGIEFDYCTVHAVTALREEGIETHIINNNPETVSTDFDTSDKLFFEPLTMEYVMNVIERERPDGVLVQFGGQTSVNLALPLKKELKRRTDLDTMIMGTDPEDMDLAEDREKFYVLMQKFGILQPEGGYATSQHEAIEVAQRIGFPVLVRPSYVLGGRAMEIVYDEIDLERYMKEAVRVSPEHPILIDDFLEGACEIDVDAVCDRKDVLIGAIMEHIEEAGVHSGDSACVIPPQSLSEDVLAQVRDYTRKIALGLRVKGLINIQMAEKGGKVFVLEANPRSSRTIPFVSKAVGLPLAKIAARVIAGHSLKEMGYTDEPKPKHVSIKEVLLPFDKLPGADPVLGPEMKSTGEVMGIDYDFGRAYYKAELAADNLLPLTGKVFLSIRNADKPELVEVARKLQAAGLELMGTRGTVNYLAQHGVFMDTVKKVHDGSPNVIDMMRRDEVDLIINTPTSKQSRRDGSRIRRAAVDFKVPYITTIQAASAAAAAIETMKKGEDLTIKSINEYHKEMGL</sequence>
<gene>
    <name evidence="1" type="primary">carB</name>
    <name type="ordered locus">MA_2143</name>
</gene>
<feature type="chain" id="PRO_0000145073" description="Carbamoyl phosphate synthase large chain">
    <location>
        <begin position="1"/>
        <end position="1070"/>
    </location>
</feature>
<feature type="domain" description="ATP-grasp 1" evidence="1">
    <location>
        <begin position="133"/>
        <end position="325"/>
    </location>
</feature>
<feature type="domain" description="ATP-grasp 2" evidence="1">
    <location>
        <begin position="672"/>
        <end position="863"/>
    </location>
</feature>
<feature type="domain" description="MGS-like" evidence="1">
    <location>
        <begin position="930"/>
        <end position="1070"/>
    </location>
</feature>
<feature type="region of interest" description="Carboxyphosphate synthetic domain" evidence="1">
    <location>
        <begin position="1"/>
        <end position="399"/>
    </location>
</feature>
<feature type="region of interest" description="Oligomerization domain" evidence="1">
    <location>
        <begin position="400"/>
        <end position="540"/>
    </location>
</feature>
<feature type="region of interest" description="Carbamoyl phosphate synthetic domain" evidence="1">
    <location>
        <begin position="541"/>
        <end position="931"/>
    </location>
</feature>
<feature type="region of interest" description="Allosteric domain" evidence="1">
    <location>
        <begin position="932"/>
        <end position="1070"/>
    </location>
</feature>
<feature type="binding site" evidence="1">
    <location>
        <position position="129"/>
    </location>
    <ligand>
        <name>ATP</name>
        <dbReference type="ChEBI" id="CHEBI:30616"/>
        <label>1</label>
    </ligand>
</feature>
<feature type="binding site" evidence="1">
    <location>
        <position position="169"/>
    </location>
    <ligand>
        <name>ATP</name>
        <dbReference type="ChEBI" id="CHEBI:30616"/>
        <label>1</label>
    </ligand>
</feature>
<feature type="binding site" evidence="1">
    <location>
        <position position="175"/>
    </location>
    <ligand>
        <name>ATP</name>
        <dbReference type="ChEBI" id="CHEBI:30616"/>
        <label>1</label>
    </ligand>
</feature>
<feature type="binding site" evidence="1">
    <location>
        <position position="176"/>
    </location>
    <ligand>
        <name>ATP</name>
        <dbReference type="ChEBI" id="CHEBI:30616"/>
        <label>1</label>
    </ligand>
</feature>
<feature type="binding site" evidence="1">
    <location>
        <position position="208"/>
    </location>
    <ligand>
        <name>ATP</name>
        <dbReference type="ChEBI" id="CHEBI:30616"/>
        <label>1</label>
    </ligand>
</feature>
<feature type="binding site" evidence="1">
    <location>
        <position position="210"/>
    </location>
    <ligand>
        <name>ATP</name>
        <dbReference type="ChEBI" id="CHEBI:30616"/>
        <label>1</label>
    </ligand>
</feature>
<feature type="binding site" evidence="1">
    <location>
        <position position="215"/>
    </location>
    <ligand>
        <name>ATP</name>
        <dbReference type="ChEBI" id="CHEBI:30616"/>
        <label>1</label>
    </ligand>
</feature>
<feature type="binding site" evidence="1">
    <location>
        <position position="241"/>
    </location>
    <ligand>
        <name>ATP</name>
        <dbReference type="ChEBI" id="CHEBI:30616"/>
        <label>1</label>
    </ligand>
</feature>
<feature type="binding site" evidence="1">
    <location>
        <position position="242"/>
    </location>
    <ligand>
        <name>ATP</name>
        <dbReference type="ChEBI" id="CHEBI:30616"/>
        <label>1</label>
    </ligand>
</feature>
<feature type="binding site" evidence="1">
    <location>
        <position position="243"/>
    </location>
    <ligand>
        <name>ATP</name>
        <dbReference type="ChEBI" id="CHEBI:30616"/>
        <label>1</label>
    </ligand>
</feature>
<feature type="binding site" evidence="1">
    <location>
        <position position="284"/>
    </location>
    <ligand>
        <name>ATP</name>
        <dbReference type="ChEBI" id="CHEBI:30616"/>
        <label>1</label>
    </ligand>
</feature>
<feature type="binding site" evidence="1">
    <location>
        <position position="284"/>
    </location>
    <ligand>
        <name>Mg(2+)</name>
        <dbReference type="ChEBI" id="CHEBI:18420"/>
        <label>1</label>
    </ligand>
</feature>
<feature type="binding site" evidence="1">
    <location>
        <position position="284"/>
    </location>
    <ligand>
        <name>Mn(2+)</name>
        <dbReference type="ChEBI" id="CHEBI:29035"/>
        <label>1</label>
    </ligand>
</feature>
<feature type="binding site" evidence="1">
    <location>
        <position position="296"/>
    </location>
    <ligand>
        <name>ATP</name>
        <dbReference type="ChEBI" id="CHEBI:30616"/>
        <label>1</label>
    </ligand>
</feature>
<feature type="binding site" evidence="1">
    <location>
        <position position="296"/>
    </location>
    <ligand>
        <name>Mg(2+)</name>
        <dbReference type="ChEBI" id="CHEBI:18420"/>
        <label>1</label>
    </ligand>
</feature>
<feature type="binding site" evidence="1">
    <location>
        <position position="296"/>
    </location>
    <ligand>
        <name>Mg(2+)</name>
        <dbReference type="ChEBI" id="CHEBI:18420"/>
        <label>2</label>
    </ligand>
</feature>
<feature type="binding site" evidence="1">
    <location>
        <position position="296"/>
    </location>
    <ligand>
        <name>Mn(2+)</name>
        <dbReference type="ChEBI" id="CHEBI:29035"/>
        <label>1</label>
    </ligand>
</feature>
<feature type="binding site" evidence="1">
    <location>
        <position position="296"/>
    </location>
    <ligand>
        <name>Mn(2+)</name>
        <dbReference type="ChEBI" id="CHEBI:29035"/>
        <label>2</label>
    </ligand>
</feature>
<feature type="binding site" evidence="1">
    <location>
        <position position="298"/>
    </location>
    <ligand>
        <name>Mg(2+)</name>
        <dbReference type="ChEBI" id="CHEBI:18420"/>
        <label>2</label>
    </ligand>
</feature>
<feature type="binding site" evidence="1">
    <location>
        <position position="298"/>
    </location>
    <ligand>
        <name>Mn(2+)</name>
        <dbReference type="ChEBI" id="CHEBI:29035"/>
        <label>2</label>
    </ligand>
</feature>
<feature type="binding site" evidence="1">
    <location>
        <position position="708"/>
    </location>
    <ligand>
        <name>ATP</name>
        <dbReference type="ChEBI" id="CHEBI:30616"/>
        <label>2</label>
    </ligand>
</feature>
<feature type="binding site" evidence="1">
    <location>
        <position position="747"/>
    </location>
    <ligand>
        <name>ATP</name>
        <dbReference type="ChEBI" id="CHEBI:30616"/>
        <label>2</label>
    </ligand>
</feature>
<feature type="binding site" evidence="1">
    <location>
        <position position="749"/>
    </location>
    <ligand>
        <name>ATP</name>
        <dbReference type="ChEBI" id="CHEBI:30616"/>
        <label>2</label>
    </ligand>
</feature>
<feature type="binding site" evidence="1">
    <location>
        <position position="754"/>
    </location>
    <ligand>
        <name>ATP</name>
        <dbReference type="ChEBI" id="CHEBI:30616"/>
        <label>2</label>
    </ligand>
</feature>
<feature type="binding site" evidence="1">
    <location>
        <position position="779"/>
    </location>
    <ligand>
        <name>ATP</name>
        <dbReference type="ChEBI" id="CHEBI:30616"/>
        <label>2</label>
    </ligand>
</feature>
<feature type="binding site" evidence="1">
    <location>
        <position position="780"/>
    </location>
    <ligand>
        <name>ATP</name>
        <dbReference type="ChEBI" id="CHEBI:30616"/>
        <label>2</label>
    </ligand>
</feature>
<feature type="binding site" evidence="1">
    <location>
        <position position="781"/>
    </location>
    <ligand>
        <name>ATP</name>
        <dbReference type="ChEBI" id="CHEBI:30616"/>
        <label>2</label>
    </ligand>
</feature>
<feature type="binding site" evidence="1">
    <location>
        <position position="782"/>
    </location>
    <ligand>
        <name>ATP</name>
        <dbReference type="ChEBI" id="CHEBI:30616"/>
        <label>2</label>
    </ligand>
</feature>
<feature type="binding site" evidence="1">
    <location>
        <position position="822"/>
    </location>
    <ligand>
        <name>ATP</name>
        <dbReference type="ChEBI" id="CHEBI:30616"/>
        <label>2</label>
    </ligand>
</feature>
<feature type="binding site" evidence="1">
    <location>
        <position position="822"/>
    </location>
    <ligand>
        <name>Mg(2+)</name>
        <dbReference type="ChEBI" id="CHEBI:18420"/>
        <label>3</label>
    </ligand>
</feature>
<feature type="binding site" evidence="1">
    <location>
        <position position="822"/>
    </location>
    <ligand>
        <name>Mn(2+)</name>
        <dbReference type="ChEBI" id="CHEBI:29035"/>
        <label>3</label>
    </ligand>
</feature>
<feature type="binding site" evidence="1">
    <location>
        <position position="834"/>
    </location>
    <ligand>
        <name>ATP</name>
        <dbReference type="ChEBI" id="CHEBI:30616"/>
        <label>2</label>
    </ligand>
</feature>
<feature type="binding site" evidence="1">
    <location>
        <position position="834"/>
    </location>
    <ligand>
        <name>Mg(2+)</name>
        <dbReference type="ChEBI" id="CHEBI:18420"/>
        <label>3</label>
    </ligand>
</feature>
<feature type="binding site" evidence="1">
    <location>
        <position position="834"/>
    </location>
    <ligand>
        <name>Mg(2+)</name>
        <dbReference type="ChEBI" id="CHEBI:18420"/>
        <label>4</label>
    </ligand>
</feature>
<feature type="binding site" evidence="1">
    <location>
        <position position="834"/>
    </location>
    <ligand>
        <name>Mn(2+)</name>
        <dbReference type="ChEBI" id="CHEBI:29035"/>
        <label>3</label>
    </ligand>
</feature>
<feature type="binding site" evidence="1">
    <location>
        <position position="834"/>
    </location>
    <ligand>
        <name>Mn(2+)</name>
        <dbReference type="ChEBI" id="CHEBI:29035"/>
        <label>4</label>
    </ligand>
</feature>
<feature type="binding site" evidence="1">
    <location>
        <position position="836"/>
    </location>
    <ligand>
        <name>Mg(2+)</name>
        <dbReference type="ChEBI" id="CHEBI:18420"/>
        <label>4</label>
    </ligand>
</feature>
<feature type="binding site" evidence="1">
    <location>
        <position position="836"/>
    </location>
    <ligand>
        <name>Mn(2+)</name>
        <dbReference type="ChEBI" id="CHEBI:29035"/>
        <label>4</label>
    </ligand>
</feature>
<proteinExistence type="inferred from homology"/>
<comment type="function">
    <text evidence="1">Large subunit of the glutamine-dependent carbamoyl phosphate synthetase (CPSase). CPSase catalyzes the formation of carbamoyl phosphate from the ammonia moiety of glutamine, carbonate, and phosphate donated by ATP, constituting the first step of 2 biosynthetic pathways, one leading to arginine and/or urea and the other to pyrimidine nucleotides. The large subunit (synthetase) binds the substrates ammonia (free or transferred from glutamine from the small subunit), hydrogencarbonate and ATP and carries out an ATP-coupled ligase reaction, activating hydrogencarbonate by forming carboxy phosphate which reacts with ammonia to form carbamoyl phosphate.</text>
</comment>
<comment type="catalytic activity">
    <reaction evidence="1">
        <text>hydrogencarbonate + L-glutamine + 2 ATP + H2O = carbamoyl phosphate + L-glutamate + 2 ADP + phosphate + 2 H(+)</text>
        <dbReference type="Rhea" id="RHEA:18633"/>
        <dbReference type="ChEBI" id="CHEBI:15377"/>
        <dbReference type="ChEBI" id="CHEBI:15378"/>
        <dbReference type="ChEBI" id="CHEBI:17544"/>
        <dbReference type="ChEBI" id="CHEBI:29985"/>
        <dbReference type="ChEBI" id="CHEBI:30616"/>
        <dbReference type="ChEBI" id="CHEBI:43474"/>
        <dbReference type="ChEBI" id="CHEBI:58228"/>
        <dbReference type="ChEBI" id="CHEBI:58359"/>
        <dbReference type="ChEBI" id="CHEBI:456216"/>
        <dbReference type="EC" id="6.3.5.5"/>
    </reaction>
</comment>
<comment type="catalytic activity">
    <molecule>Carbamoyl phosphate synthase large chain</molecule>
    <reaction evidence="1">
        <text>hydrogencarbonate + NH4(+) + 2 ATP = carbamoyl phosphate + 2 ADP + phosphate + 2 H(+)</text>
        <dbReference type="Rhea" id="RHEA:18029"/>
        <dbReference type="ChEBI" id="CHEBI:15378"/>
        <dbReference type="ChEBI" id="CHEBI:17544"/>
        <dbReference type="ChEBI" id="CHEBI:28938"/>
        <dbReference type="ChEBI" id="CHEBI:30616"/>
        <dbReference type="ChEBI" id="CHEBI:43474"/>
        <dbReference type="ChEBI" id="CHEBI:58228"/>
        <dbReference type="ChEBI" id="CHEBI:456216"/>
        <dbReference type="EC" id="6.3.4.16"/>
    </reaction>
</comment>
<comment type="cofactor">
    <cofactor evidence="1">
        <name>Mg(2+)</name>
        <dbReference type="ChEBI" id="CHEBI:18420"/>
    </cofactor>
    <cofactor evidence="1">
        <name>Mn(2+)</name>
        <dbReference type="ChEBI" id="CHEBI:29035"/>
    </cofactor>
    <text evidence="1">Binds 4 Mg(2+) or Mn(2+) ions per subunit.</text>
</comment>
<comment type="pathway">
    <text evidence="1">Amino-acid biosynthesis; L-arginine biosynthesis; carbamoyl phosphate from bicarbonate: step 1/1.</text>
</comment>
<comment type="pathway">
    <text evidence="1">Pyrimidine metabolism; UMP biosynthesis via de novo pathway; (S)-dihydroorotate from bicarbonate: step 1/3.</text>
</comment>
<comment type="subunit">
    <text evidence="1">Composed of two chains; the small (or glutamine) chain promotes the hydrolysis of glutamine to ammonia, which is used by the large (or ammonia) chain to synthesize carbamoyl phosphate. Tetramer of heterodimers (alpha,beta)4.</text>
</comment>
<comment type="domain">
    <text evidence="1">The large subunit is composed of 2 ATP-grasp domains that are involved in binding the 2 ATP molecules needed for carbamoyl phosphate synthesis. The N-terminal ATP-grasp domain (referred to as the carboxyphosphate synthetic component) catalyzes the ATP-dependent phosphorylation of hydrogencarbonate to carboxyphosphate and the subsequent nucleophilic attack by ammonia to form a carbamate intermediate. The C-terminal ATP-grasp domain (referred to as the carbamoyl phosphate synthetic component) then catalyzes the phosphorylation of carbamate with the second ATP to form the end product carbamoyl phosphate. The reactive and unstable enzyme intermediates are sequentially channeled from one active site to the next through the interior of the protein over a distance of at least 96 A.</text>
</comment>
<comment type="similarity">
    <text evidence="1">Belongs to the CarB family.</text>
</comment>
<dbReference type="EC" id="6.3.4.16" evidence="1"/>
<dbReference type="EC" id="6.3.5.5" evidence="1"/>
<dbReference type="EMBL" id="AE010299">
    <property type="protein sequence ID" value="AAM05541.1"/>
    <property type="molecule type" value="Genomic_DNA"/>
</dbReference>
<dbReference type="RefSeq" id="WP_011022129.1">
    <property type="nucleotide sequence ID" value="NC_003552.1"/>
</dbReference>
<dbReference type="SMR" id="Q8TNY4"/>
<dbReference type="FunCoup" id="Q8TNY4">
    <property type="interactions" value="200"/>
</dbReference>
<dbReference type="STRING" id="188937.MA_2143"/>
<dbReference type="EnsemblBacteria" id="AAM05541">
    <property type="protein sequence ID" value="AAM05541"/>
    <property type="gene ID" value="MA_2143"/>
</dbReference>
<dbReference type="GeneID" id="1474031"/>
<dbReference type="KEGG" id="mac:MA_2143"/>
<dbReference type="HOGENOM" id="CLU_000513_1_3_2"/>
<dbReference type="InParanoid" id="Q8TNY4"/>
<dbReference type="OrthoDB" id="85487at2157"/>
<dbReference type="PhylomeDB" id="Q8TNY4"/>
<dbReference type="UniPathway" id="UPA00068">
    <property type="reaction ID" value="UER00171"/>
</dbReference>
<dbReference type="UniPathway" id="UPA00070">
    <property type="reaction ID" value="UER00115"/>
</dbReference>
<dbReference type="Proteomes" id="UP000002487">
    <property type="component" value="Chromosome"/>
</dbReference>
<dbReference type="GO" id="GO:0005737">
    <property type="term" value="C:cytoplasm"/>
    <property type="evidence" value="ECO:0000318"/>
    <property type="project" value="GO_Central"/>
</dbReference>
<dbReference type="GO" id="GO:0005524">
    <property type="term" value="F:ATP binding"/>
    <property type="evidence" value="ECO:0007669"/>
    <property type="project" value="UniProtKB-UniRule"/>
</dbReference>
<dbReference type="GO" id="GO:0004087">
    <property type="term" value="F:carbamoyl-phosphate synthase (ammonia) activity"/>
    <property type="evidence" value="ECO:0007669"/>
    <property type="project" value="RHEA"/>
</dbReference>
<dbReference type="GO" id="GO:0004088">
    <property type="term" value="F:carbamoyl-phosphate synthase (glutamine-hydrolyzing) activity"/>
    <property type="evidence" value="ECO:0007669"/>
    <property type="project" value="UniProtKB-UniRule"/>
</dbReference>
<dbReference type="GO" id="GO:0046872">
    <property type="term" value="F:metal ion binding"/>
    <property type="evidence" value="ECO:0007669"/>
    <property type="project" value="UniProtKB-KW"/>
</dbReference>
<dbReference type="GO" id="GO:0044205">
    <property type="term" value="P:'de novo' UMP biosynthetic process"/>
    <property type="evidence" value="ECO:0007669"/>
    <property type="project" value="UniProtKB-UniRule"/>
</dbReference>
<dbReference type="GO" id="GO:0006541">
    <property type="term" value="P:glutamine metabolic process"/>
    <property type="evidence" value="ECO:0000318"/>
    <property type="project" value="GO_Central"/>
</dbReference>
<dbReference type="GO" id="GO:0006526">
    <property type="term" value="P:L-arginine biosynthetic process"/>
    <property type="evidence" value="ECO:0007669"/>
    <property type="project" value="UniProtKB-UniRule"/>
</dbReference>
<dbReference type="CDD" id="cd01424">
    <property type="entry name" value="MGS_CPS_II"/>
    <property type="match status" value="1"/>
</dbReference>
<dbReference type="FunFam" id="1.10.1030.10:FF:000002">
    <property type="entry name" value="Carbamoyl-phosphate synthase large chain"/>
    <property type="match status" value="1"/>
</dbReference>
<dbReference type="FunFam" id="3.30.1490.20:FF:000001">
    <property type="entry name" value="Carbamoyl-phosphate synthase large chain"/>
    <property type="match status" value="1"/>
</dbReference>
<dbReference type="FunFam" id="3.30.470.20:FF:000001">
    <property type="entry name" value="Carbamoyl-phosphate synthase large chain"/>
    <property type="match status" value="1"/>
</dbReference>
<dbReference type="FunFam" id="3.30.470.20:FF:000013">
    <property type="entry name" value="Carbamoyl-phosphate synthase large chain"/>
    <property type="match status" value="1"/>
</dbReference>
<dbReference type="FunFam" id="3.40.50.1380:FF:000011">
    <property type="entry name" value="Carbamoyl-phosphate synthase large chain"/>
    <property type="match status" value="1"/>
</dbReference>
<dbReference type="FunFam" id="3.40.50.20:FF:000001">
    <property type="entry name" value="Carbamoyl-phosphate synthase large chain"/>
    <property type="match status" value="2"/>
</dbReference>
<dbReference type="Gene3D" id="3.40.50.20">
    <property type="match status" value="2"/>
</dbReference>
<dbReference type="Gene3D" id="3.30.1490.20">
    <property type="entry name" value="ATP-grasp fold, A domain"/>
    <property type="match status" value="1"/>
</dbReference>
<dbReference type="Gene3D" id="3.30.470.20">
    <property type="entry name" value="ATP-grasp fold, B domain"/>
    <property type="match status" value="2"/>
</dbReference>
<dbReference type="Gene3D" id="1.10.1030.10">
    <property type="entry name" value="Carbamoyl-phosphate synthetase, large subunit oligomerisation domain"/>
    <property type="match status" value="1"/>
</dbReference>
<dbReference type="Gene3D" id="3.40.50.1380">
    <property type="entry name" value="Methylglyoxal synthase-like domain"/>
    <property type="match status" value="1"/>
</dbReference>
<dbReference type="HAMAP" id="MF_01210_A">
    <property type="entry name" value="CPSase_L_chain_A"/>
    <property type="match status" value="1"/>
</dbReference>
<dbReference type="HAMAP" id="MF_01210_B">
    <property type="entry name" value="CPSase_L_chain_B"/>
    <property type="match status" value="1"/>
</dbReference>
<dbReference type="InterPro" id="IPR011761">
    <property type="entry name" value="ATP-grasp"/>
</dbReference>
<dbReference type="InterPro" id="IPR013815">
    <property type="entry name" value="ATP_grasp_subdomain_1"/>
</dbReference>
<dbReference type="InterPro" id="IPR006275">
    <property type="entry name" value="CarbamoylP_synth_lsu"/>
</dbReference>
<dbReference type="InterPro" id="IPR005480">
    <property type="entry name" value="CarbamoylP_synth_lsu_oligo"/>
</dbReference>
<dbReference type="InterPro" id="IPR036897">
    <property type="entry name" value="CarbamoylP_synth_lsu_oligo_sf"/>
</dbReference>
<dbReference type="InterPro" id="IPR005479">
    <property type="entry name" value="CbamoylP_synth_lsu-like_ATP-bd"/>
</dbReference>
<dbReference type="InterPro" id="IPR005483">
    <property type="entry name" value="CbamoylP_synth_lsu_CPSase_dom"/>
</dbReference>
<dbReference type="InterPro" id="IPR011607">
    <property type="entry name" value="MGS-like_dom"/>
</dbReference>
<dbReference type="InterPro" id="IPR036914">
    <property type="entry name" value="MGS-like_dom_sf"/>
</dbReference>
<dbReference type="InterPro" id="IPR033937">
    <property type="entry name" value="MGS_CPS_CarB"/>
</dbReference>
<dbReference type="InterPro" id="IPR016185">
    <property type="entry name" value="PreATP-grasp_dom_sf"/>
</dbReference>
<dbReference type="NCBIfam" id="TIGR01369">
    <property type="entry name" value="CPSaseII_lrg"/>
    <property type="match status" value="1"/>
</dbReference>
<dbReference type="NCBIfam" id="NF003671">
    <property type="entry name" value="PRK05294.1"/>
    <property type="match status" value="1"/>
</dbReference>
<dbReference type="NCBIfam" id="NF009455">
    <property type="entry name" value="PRK12815.1"/>
    <property type="match status" value="1"/>
</dbReference>
<dbReference type="PANTHER" id="PTHR11405:SF53">
    <property type="entry name" value="CARBAMOYL-PHOSPHATE SYNTHASE [AMMONIA], MITOCHONDRIAL"/>
    <property type="match status" value="1"/>
</dbReference>
<dbReference type="PANTHER" id="PTHR11405">
    <property type="entry name" value="CARBAMOYLTRANSFERASE FAMILY MEMBER"/>
    <property type="match status" value="1"/>
</dbReference>
<dbReference type="Pfam" id="PF02786">
    <property type="entry name" value="CPSase_L_D2"/>
    <property type="match status" value="2"/>
</dbReference>
<dbReference type="Pfam" id="PF02787">
    <property type="entry name" value="CPSase_L_D3"/>
    <property type="match status" value="1"/>
</dbReference>
<dbReference type="Pfam" id="PF02142">
    <property type="entry name" value="MGS"/>
    <property type="match status" value="1"/>
</dbReference>
<dbReference type="PRINTS" id="PR00098">
    <property type="entry name" value="CPSASE"/>
</dbReference>
<dbReference type="SMART" id="SM01096">
    <property type="entry name" value="CPSase_L_D3"/>
    <property type="match status" value="1"/>
</dbReference>
<dbReference type="SMART" id="SM00851">
    <property type="entry name" value="MGS"/>
    <property type="match status" value="1"/>
</dbReference>
<dbReference type="SUPFAM" id="SSF48108">
    <property type="entry name" value="Carbamoyl phosphate synthetase, large subunit connection domain"/>
    <property type="match status" value="1"/>
</dbReference>
<dbReference type="SUPFAM" id="SSF56059">
    <property type="entry name" value="Glutathione synthetase ATP-binding domain-like"/>
    <property type="match status" value="2"/>
</dbReference>
<dbReference type="SUPFAM" id="SSF52335">
    <property type="entry name" value="Methylglyoxal synthase-like"/>
    <property type="match status" value="1"/>
</dbReference>
<dbReference type="SUPFAM" id="SSF52440">
    <property type="entry name" value="PreATP-grasp domain"/>
    <property type="match status" value="2"/>
</dbReference>
<dbReference type="PROSITE" id="PS50975">
    <property type="entry name" value="ATP_GRASP"/>
    <property type="match status" value="2"/>
</dbReference>
<dbReference type="PROSITE" id="PS00866">
    <property type="entry name" value="CPSASE_1"/>
    <property type="match status" value="1"/>
</dbReference>
<dbReference type="PROSITE" id="PS00867">
    <property type="entry name" value="CPSASE_2"/>
    <property type="match status" value="1"/>
</dbReference>
<dbReference type="PROSITE" id="PS51855">
    <property type="entry name" value="MGS"/>
    <property type="match status" value="1"/>
</dbReference>
<evidence type="ECO:0000255" key="1">
    <source>
        <dbReference type="HAMAP-Rule" id="MF_01210"/>
    </source>
</evidence>
<protein>
    <recommendedName>
        <fullName evidence="1">Carbamoyl phosphate synthase large chain</fullName>
        <ecNumber evidence="1">6.3.4.16</ecNumber>
        <ecNumber evidence="1">6.3.5.5</ecNumber>
    </recommendedName>
    <alternativeName>
        <fullName evidence="1">Carbamoyl phosphate synthetase ammonia chain</fullName>
    </alternativeName>
</protein>
<name>CARB_METAC</name>
<keyword id="KW-0028">Amino-acid biosynthesis</keyword>
<keyword id="KW-0055">Arginine biosynthesis</keyword>
<keyword id="KW-0067">ATP-binding</keyword>
<keyword id="KW-0436">Ligase</keyword>
<keyword id="KW-0460">Magnesium</keyword>
<keyword id="KW-0464">Manganese</keyword>
<keyword id="KW-0479">Metal-binding</keyword>
<keyword id="KW-0547">Nucleotide-binding</keyword>
<keyword id="KW-0665">Pyrimidine biosynthesis</keyword>
<keyword id="KW-1185">Reference proteome</keyword>
<keyword id="KW-0677">Repeat</keyword>
<accession>Q8TNY4</accession>
<organism>
    <name type="scientific">Methanosarcina acetivorans (strain ATCC 35395 / DSM 2834 / JCM 12185 / C2A)</name>
    <dbReference type="NCBI Taxonomy" id="188937"/>
    <lineage>
        <taxon>Archaea</taxon>
        <taxon>Methanobacteriati</taxon>
        <taxon>Methanobacteriota</taxon>
        <taxon>Stenosarchaea group</taxon>
        <taxon>Methanomicrobia</taxon>
        <taxon>Methanosarcinales</taxon>
        <taxon>Methanosarcinaceae</taxon>
        <taxon>Methanosarcina</taxon>
    </lineage>
</organism>
<reference key="1">
    <citation type="journal article" date="2002" name="Genome Res.">
        <title>The genome of Methanosarcina acetivorans reveals extensive metabolic and physiological diversity.</title>
        <authorList>
            <person name="Galagan J.E."/>
            <person name="Nusbaum C."/>
            <person name="Roy A."/>
            <person name="Endrizzi M.G."/>
            <person name="Macdonald P."/>
            <person name="FitzHugh W."/>
            <person name="Calvo S."/>
            <person name="Engels R."/>
            <person name="Smirnov S."/>
            <person name="Atnoor D."/>
            <person name="Brown A."/>
            <person name="Allen N."/>
            <person name="Naylor J."/>
            <person name="Stange-Thomann N."/>
            <person name="DeArellano K."/>
            <person name="Johnson R."/>
            <person name="Linton L."/>
            <person name="McEwan P."/>
            <person name="McKernan K."/>
            <person name="Talamas J."/>
            <person name="Tirrell A."/>
            <person name="Ye W."/>
            <person name="Zimmer A."/>
            <person name="Barber R.D."/>
            <person name="Cann I."/>
            <person name="Graham D.E."/>
            <person name="Grahame D.A."/>
            <person name="Guss A.M."/>
            <person name="Hedderich R."/>
            <person name="Ingram-Smith C."/>
            <person name="Kuettner H.C."/>
            <person name="Krzycki J.A."/>
            <person name="Leigh J.A."/>
            <person name="Li W."/>
            <person name="Liu J."/>
            <person name="Mukhopadhyay B."/>
            <person name="Reeve J.N."/>
            <person name="Smith K."/>
            <person name="Springer T.A."/>
            <person name="Umayam L.A."/>
            <person name="White O."/>
            <person name="White R.H."/>
            <person name="de Macario E.C."/>
            <person name="Ferry J.G."/>
            <person name="Jarrell K.F."/>
            <person name="Jing H."/>
            <person name="Macario A.J.L."/>
            <person name="Paulsen I.T."/>
            <person name="Pritchett M."/>
            <person name="Sowers K.R."/>
            <person name="Swanson R.V."/>
            <person name="Zinder S.H."/>
            <person name="Lander E."/>
            <person name="Metcalf W.W."/>
            <person name="Birren B."/>
        </authorList>
    </citation>
    <scope>NUCLEOTIDE SEQUENCE [LARGE SCALE GENOMIC DNA]</scope>
    <source>
        <strain>ATCC 35395 / DSM 2834 / JCM 12185 / C2A</strain>
    </source>
</reference>